<dbReference type="EMBL" id="AE016853">
    <property type="protein sequence ID" value="AAO58356.1"/>
    <property type="molecule type" value="Genomic_DNA"/>
</dbReference>
<dbReference type="RefSeq" id="NP_794661.1">
    <property type="nucleotide sequence ID" value="NC_004578.1"/>
</dbReference>
<dbReference type="RefSeq" id="WP_005763035.1">
    <property type="nucleotide sequence ID" value="NC_004578.1"/>
</dbReference>
<dbReference type="STRING" id="223283.PSPTO_4928"/>
<dbReference type="GeneID" id="1186611"/>
<dbReference type="KEGG" id="pst:PSPTO_4928"/>
<dbReference type="PATRIC" id="fig|223283.9.peg.5042"/>
<dbReference type="eggNOG" id="COG1032">
    <property type="taxonomic scope" value="Bacteria"/>
</dbReference>
<dbReference type="HOGENOM" id="CLU_018288_2_0_6"/>
<dbReference type="OrthoDB" id="9803479at2"/>
<dbReference type="PhylomeDB" id="Q87VK8"/>
<dbReference type="Proteomes" id="UP000002515">
    <property type="component" value="Chromosome"/>
</dbReference>
<dbReference type="GO" id="GO:0051539">
    <property type="term" value="F:4 iron, 4 sulfur cluster binding"/>
    <property type="evidence" value="ECO:0007669"/>
    <property type="project" value="UniProtKB-KW"/>
</dbReference>
<dbReference type="GO" id="GO:0003824">
    <property type="term" value="F:catalytic activity"/>
    <property type="evidence" value="ECO:0007669"/>
    <property type="project" value="InterPro"/>
</dbReference>
<dbReference type="GO" id="GO:0005506">
    <property type="term" value="F:iron ion binding"/>
    <property type="evidence" value="ECO:0007669"/>
    <property type="project" value="UniProtKB-UniRule"/>
</dbReference>
<dbReference type="Gene3D" id="3.80.30.20">
    <property type="entry name" value="tm_1862 like domain"/>
    <property type="match status" value="1"/>
</dbReference>
<dbReference type="HAMAP" id="MF_01251">
    <property type="entry name" value="UPF0313"/>
    <property type="match status" value="1"/>
</dbReference>
<dbReference type="InterPro" id="IPR006638">
    <property type="entry name" value="Elp3/MiaA/NifB-like_rSAM"/>
</dbReference>
<dbReference type="InterPro" id="IPR020612">
    <property type="entry name" value="Methylthiotransferase_CS"/>
</dbReference>
<dbReference type="InterPro" id="IPR007197">
    <property type="entry name" value="rSAM"/>
</dbReference>
<dbReference type="InterPro" id="IPR023404">
    <property type="entry name" value="rSAM_horseshoe"/>
</dbReference>
<dbReference type="InterPro" id="IPR022946">
    <property type="entry name" value="UPF0313"/>
</dbReference>
<dbReference type="InterPro" id="IPR024560">
    <property type="entry name" value="UPF0313_C"/>
</dbReference>
<dbReference type="InterPro" id="IPR013704">
    <property type="entry name" value="UPF0313_N"/>
</dbReference>
<dbReference type="NCBIfam" id="TIGR03904">
    <property type="entry name" value="SAM_YgiQ"/>
    <property type="match status" value="1"/>
</dbReference>
<dbReference type="PANTHER" id="PTHR32331">
    <property type="entry name" value="UPF0313 PROTEIN YGIQ"/>
    <property type="match status" value="1"/>
</dbReference>
<dbReference type="PANTHER" id="PTHR32331:SF0">
    <property type="entry name" value="UPF0313 PROTEIN YGIQ"/>
    <property type="match status" value="1"/>
</dbReference>
<dbReference type="Pfam" id="PF11842">
    <property type="entry name" value="DUF3362"/>
    <property type="match status" value="1"/>
</dbReference>
<dbReference type="Pfam" id="PF04055">
    <property type="entry name" value="Radical_SAM"/>
    <property type="match status" value="1"/>
</dbReference>
<dbReference type="Pfam" id="PF08497">
    <property type="entry name" value="Radical_SAM_N"/>
    <property type="match status" value="1"/>
</dbReference>
<dbReference type="SFLD" id="SFLDG01082">
    <property type="entry name" value="B12-binding_domain_containing"/>
    <property type="match status" value="1"/>
</dbReference>
<dbReference type="SFLD" id="SFLDS00029">
    <property type="entry name" value="Radical_SAM"/>
    <property type="match status" value="1"/>
</dbReference>
<dbReference type="SFLD" id="SFLDG01069">
    <property type="entry name" value="UPF0313"/>
    <property type="match status" value="1"/>
</dbReference>
<dbReference type="SMART" id="SM00729">
    <property type="entry name" value="Elp3"/>
    <property type="match status" value="1"/>
</dbReference>
<dbReference type="SUPFAM" id="SSF102114">
    <property type="entry name" value="Radical SAM enzymes"/>
    <property type="match status" value="1"/>
</dbReference>
<dbReference type="PROSITE" id="PS51918">
    <property type="entry name" value="RADICAL_SAM"/>
    <property type="match status" value="1"/>
</dbReference>
<feature type="chain" id="PRO_0000076391" description="UPF0313 protein PSPTO_4928">
    <location>
        <begin position="1"/>
        <end position="771"/>
    </location>
</feature>
<feature type="domain" description="Radical SAM core" evidence="2">
    <location>
        <begin position="371"/>
        <end position="649"/>
    </location>
</feature>
<feature type="region of interest" description="Disordered" evidence="3">
    <location>
        <begin position="683"/>
        <end position="771"/>
    </location>
</feature>
<feature type="compositionally biased region" description="Basic and acidic residues" evidence="3">
    <location>
        <begin position="726"/>
        <end position="735"/>
    </location>
</feature>
<feature type="compositionally biased region" description="Basic and acidic residues" evidence="3">
    <location>
        <begin position="745"/>
        <end position="754"/>
    </location>
</feature>
<feature type="compositionally biased region" description="Basic residues" evidence="3">
    <location>
        <begin position="756"/>
        <end position="765"/>
    </location>
</feature>
<feature type="binding site" evidence="1">
    <location>
        <position position="385"/>
    </location>
    <ligand>
        <name>[4Fe-4S] cluster</name>
        <dbReference type="ChEBI" id="CHEBI:49883"/>
        <note>4Fe-4S-S-AdoMet</note>
    </ligand>
</feature>
<feature type="binding site" evidence="1">
    <location>
        <position position="389"/>
    </location>
    <ligand>
        <name>[4Fe-4S] cluster</name>
        <dbReference type="ChEBI" id="CHEBI:49883"/>
        <note>4Fe-4S-S-AdoMet</note>
    </ligand>
</feature>
<feature type="binding site" evidence="1">
    <location>
        <position position="392"/>
    </location>
    <ligand>
        <name>[4Fe-4S] cluster</name>
        <dbReference type="ChEBI" id="CHEBI:49883"/>
        <note>4Fe-4S-S-AdoMet</note>
    </ligand>
</feature>
<proteinExistence type="inferred from homology"/>
<name>Y4928_PSESM</name>
<sequence>MQSAKPLFDYPKYWAECFGPAPFLPMSREEMDLLGWDSCDIIIVTGDAYVDHPSFGMAIIGRLLESQGFRVGIIAQPNWQSKDDFMKLGEPNLFFGVAAGNMDSMINRYTADKKIRSDDAYTPGGMAGKRPDRASLVYSQRCKEAYKHVPIVLGGIEASLRRIAHYDYWQDKVRNSILIDACADILLYGNAERAIVEVAQRLSYGHKIEDITDVRGTAFIRRDTPQGWYEVDSTRIDRPGKVDKIINPYVNTQDTQACAIEQEKGNVEDPNEAKVVQILASPRMTRDKTVIRLPSVEKVRNDAVLYAHANRVLHLETNPGNARALVQKHGEVDVWFNPPPIPMTTDEMDYVFGMPYARVPHPAYGKEKIPAYDMIRFSVNIMRGCFGGCTFCSITEHEGRIIQNRSEESIIREIEEIRDKVPGFTGVISDLGGPTANMYRIACKSPEIESACRKPSCVFPGICPNLNTDHSSLIQLYRSARALPGVKKILIASGLRYDLAVESPEYVKELVTHHVGGYLKIAPEHTEEGPLNQMMKPGIGSYDKFKRMFEKYTKEAGKEQYLIPYFIAAHPGTTDEDMMNLALWLKGNGFRADQVQAFYPSPMATATAMYHSGKNPLRKVTYKSDAVTIVKSEEQRRLHKAFLRYHDPKGWPMLRAALERMGRADLIGPGKDQLIPLHQPATDTYQSARRKNSTPAGSHKVGKDPKTTLIQTQHTGLPPRGSDGSKPWDKREEAKAAAMARNKQAAKERMDAAKGGKGKGGKPARKPVVPR</sequence>
<protein>
    <recommendedName>
        <fullName evidence="1">UPF0313 protein PSPTO_4928</fullName>
    </recommendedName>
</protein>
<comment type="cofactor">
    <cofactor evidence="1">
        <name>[4Fe-4S] cluster</name>
        <dbReference type="ChEBI" id="CHEBI:49883"/>
    </cofactor>
    <text evidence="1">Binds 1 [4Fe-4S] cluster. The cluster is coordinated with 3 cysteines and an exchangeable S-adenosyl-L-methionine.</text>
</comment>
<comment type="similarity">
    <text evidence="1">Belongs to the UPF0313 family.</text>
</comment>
<organism>
    <name type="scientific">Pseudomonas syringae pv. tomato (strain ATCC BAA-871 / DC3000)</name>
    <dbReference type="NCBI Taxonomy" id="223283"/>
    <lineage>
        <taxon>Bacteria</taxon>
        <taxon>Pseudomonadati</taxon>
        <taxon>Pseudomonadota</taxon>
        <taxon>Gammaproteobacteria</taxon>
        <taxon>Pseudomonadales</taxon>
        <taxon>Pseudomonadaceae</taxon>
        <taxon>Pseudomonas</taxon>
    </lineage>
</organism>
<reference key="1">
    <citation type="journal article" date="2003" name="Proc. Natl. Acad. Sci. U.S.A.">
        <title>The complete genome sequence of the Arabidopsis and tomato pathogen Pseudomonas syringae pv. tomato DC3000.</title>
        <authorList>
            <person name="Buell C.R."/>
            <person name="Joardar V."/>
            <person name="Lindeberg M."/>
            <person name="Selengut J."/>
            <person name="Paulsen I.T."/>
            <person name="Gwinn M.L."/>
            <person name="Dodson R.J."/>
            <person name="DeBoy R.T."/>
            <person name="Durkin A.S."/>
            <person name="Kolonay J.F."/>
            <person name="Madupu R."/>
            <person name="Daugherty S.C."/>
            <person name="Brinkac L.M."/>
            <person name="Beanan M.J."/>
            <person name="Haft D.H."/>
            <person name="Nelson W.C."/>
            <person name="Davidsen T.M."/>
            <person name="Zafar N."/>
            <person name="Zhou L."/>
            <person name="Liu J."/>
            <person name="Yuan Q."/>
            <person name="Khouri H.M."/>
            <person name="Fedorova N.B."/>
            <person name="Tran B."/>
            <person name="Russell D."/>
            <person name="Berry K.J."/>
            <person name="Utterback T.R."/>
            <person name="Van Aken S.E."/>
            <person name="Feldblyum T.V."/>
            <person name="D'Ascenzo M."/>
            <person name="Deng W.-L."/>
            <person name="Ramos A.R."/>
            <person name="Alfano J.R."/>
            <person name="Cartinhour S."/>
            <person name="Chatterjee A.K."/>
            <person name="Delaney T.P."/>
            <person name="Lazarowitz S.G."/>
            <person name="Martin G.B."/>
            <person name="Schneider D.J."/>
            <person name="Tang X."/>
            <person name="Bender C.L."/>
            <person name="White O."/>
            <person name="Fraser C.M."/>
            <person name="Collmer A."/>
        </authorList>
    </citation>
    <scope>NUCLEOTIDE SEQUENCE [LARGE SCALE GENOMIC DNA]</scope>
    <source>
        <strain>ATCC BAA-871 / DC3000</strain>
    </source>
</reference>
<keyword id="KW-0004">4Fe-4S</keyword>
<keyword id="KW-0408">Iron</keyword>
<keyword id="KW-0411">Iron-sulfur</keyword>
<keyword id="KW-0479">Metal-binding</keyword>
<keyword id="KW-1185">Reference proteome</keyword>
<keyword id="KW-0949">S-adenosyl-L-methionine</keyword>
<evidence type="ECO:0000255" key="1">
    <source>
        <dbReference type="HAMAP-Rule" id="MF_01251"/>
    </source>
</evidence>
<evidence type="ECO:0000255" key="2">
    <source>
        <dbReference type="PROSITE-ProRule" id="PRU01266"/>
    </source>
</evidence>
<evidence type="ECO:0000256" key="3">
    <source>
        <dbReference type="SAM" id="MobiDB-lite"/>
    </source>
</evidence>
<gene>
    <name type="ordered locus">PSPTO_4928</name>
</gene>
<accession>Q87VK8</accession>